<feature type="signal peptide" evidence="4">
    <location>
        <begin position="1"/>
        <end position="19"/>
    </location>
</feature>
<feature type="chain" id="PRO_0000022997" description="Phospholipase A2 inhibitor gamma subunit A" evidence="7">
    <location>
        <begin position="20"/>
        <end position="200"/>
    </location>
</feature>
<feature type="glycosylation site" description="N-linked (GlcNAc...) asparagine" evidence="3">
    <location>
        <position position="176"/>
    </location>
</feature>
<feature type="disulfide bond" evidence="1">
    <location>
        <begin position="22"/>
        <end position="46"/>
    </location>
</feature>
<feature type="disulfide bond" evidence="1">
    <location>
        <begin position="25"/>
        <end position="32"/>
    </location>
</feature>
<feature type="disulfide bond" evidence="1">
    <location>
        <begin position="39"/>
        <end position="67"/>
    </location>
</feature>
<feature type="disulfide bond" evidence="1">
    <location>
        <begin position="73"/>
        <end position="94"/>
    </location>
</feature>
<feature type="disulfide bond" evidence="1">
    <location>
        <begin position="95"/>
        <end position="100"/>
    </location>
</feature>
<feature type="disulfide bond" evidence="1">
    <location>
        <begin position="118"/>
        <end position="143"/>
    </location>
</feature>
<feature type="disulfide bond" evidence="1">
    <location>
        <begin position="136"/>
        <end position="165"/>
    </location>
</feature>
<feature type="disulfide bond" evidence="1">
    <location>
        <begin position="169"/>
        <end position="191"/>
    </location>
</feature>
<feature type="sequence conflict" description="In Ref. 2; AA sequence." evidence="5" ref="2">
    <original>S</original>
    <variation>I</variation>
    <location>
        <position position="41"/>
    </location>
</feature>
<accession>P82144</accession>
<accession>Q9I851</accession>
<name>PLIGA_GLOBS</name>
<evidence type="ECO:0000250" key="1">
    <source>
        <dbReference type="UniProtKB" id="Q7LZI1"/>
    </source>
</evidence>
<evidence type="ECO:0000250" key="2">
    <source>
        <dbReference type="UniProtKB" id="Q90358"/>
    </source>
</evidence>
<evidence type="ECO:0000255" key="3"/>
<evidence type="ECO:0000269" key="4">
    <source>
    </source>
</evidence>
<evidence type="ECO:0000305" key="5"/>
<evidence type="ECO:0000305" key="6">
    <source>
    </source>
</evidence>
<evidence type="ECO:0000305" key="7">
    <source>
    </source>
</evidence>
<reference key="1">
    <citation type="journal article" date="1999" name="IUBMB Life">
        <title>cDNA cloning of the two subunits of a phospholipase A2 inhibitor PLIgamma from blood plasma of the Chinese mamushi, Agkistrodon blomhoffii siniticus.</title>
        <authorList>
            <person name="Okumura K."/>
            <person name="Inoue S."/>
            <person name="Ohkura N."/>
            <person name="Ikeda K."/>
            <person name="Hayashi K."/>
        </authorList>
    </citation>
    <scope>NUCLEOTIDE SEQUENCE [MRNA]</scope>
    <source>
        <tissue>Liver</tissue>
    </source>
</reference>
<reference key="2">
    <citation type="journal article" date="1997" name="Biochem. J.">
        <title>Purification and characterization of three distinct types of phospholipase A2 inhibitors from the blood plasma of the Chinese mamushi, Agkistrodon blomhoffii siniticus.</title>
        <authorList>
            <person name="Ohkura N."/>
            <person name="Okuhara H."/>
            <person name="Inoue S."/>
            <person name="Ikeda K."/>
            <person name="Hayashi K."/>
        </authorList>
    </citation>
    <scope>PROTEIN SEQUENCE OF 20-49</scope>
    <scope>SUBCELLULAR LOCATION</scope>
    <source>
        <tissue>Plasma</tissue>
    </source>
</reference>
<protein>
    <recommendedName>
        <fullName>Phospholipase A2 inhibitor gamma subunit A</fullName>
        <shortName>gamma-PLI A</shortName>
    </recommendedName>
    <alternativeName>
        <fullName>Phospholipase A2 inhibitor gamma 25 kDa subunit</fullName>
    </alternativeName>
</protein>
<comment type="function">
    <text>Inhibits the enzymatic activity of phospholipase A2 (PA2).</text>
</comment>
<comment type="subunit">
    <text evidence="2">Occurs as a mixture of oligomers. Tetrameric arrangement appears to be the predominant quaternary structure.</text>
</comment>
<comment type="subcellular location">
    <subcellularLocation>
        <location evidence="4">Secreted</location>
    </subcellularLocation>
    <text evidence="4">Secreted in blood plasma.</text>
</comment>
<comment type="tissue specificity">
    <text evidence="6">Expressed by the liver.</text>
</comment>
<comment type="similarity">
    <text evidence="5">Belongs to the CNF-like-inhibitor family.</text>
</comment>
<keyword id="KW-0903">Direct protein sequencing</keyword>
<keyword id="KW-1015">Disulfide bond</keyword>
<keyword id="KW-0325">Glycoprotein</keyword>
<keyword id="KW-0593">Phospholipase A2 inhibitor</keyword>
<keyword id="KW-0964">Secreted</keyword>
<keyword id="KW-0732">Signal</keyword>
<organism>
    <name type="scientific">Gloydius brevicaudus siniticus</name>
    <name type="common">Chinese mamushi</name>
    <name type="synonym">Agkistrodon blomhoffii siniticus</name>
    <dbReference type="NCBI Taxonomy" id="31147"/>
    <lineage>
        <taxon>Eukaryota</taxon>
        <taxon>Metazoa</taxon>
        <taxon>Chordata</taxon>
        <taxon>Craniata</taxon>
        <taxon>Vertebrata</taxon>
        <taxon>Euteleostomi</taxon>
        <taxon>Lepidosauria</taxon>
        <taxon>Squamata</taxon>
        <taxon>Bifurcata</taxon>
        <taxon>Unidentata</taxon>
        <taxon>Episquamata</taxon>
        <taxon>Toxicofera</taxon>
        <taxon>Serpentes</taxon>
        <taxon>Colubroidea</taxon>
        <taxon>Viperidae</taxon>
        <taxon>Crotalinae</taxon>
        <taxon>Gloydius</taxon>
        <taxon>Gloydius brevicauda</taxon>
    </lineage>
</organism>
<proteinExistence type="evidence at protein level"/>
<sequence length="200" mass="22270">MKSLHTICLLFIFIARGNSRSCDYCHNIGKDCDGYEHECSSPEDVCGKVFLEISSASLSVRTVHKNCFSSSVCKLGHFDINIGHHSYIRGRINCCEKEPCEDQPFPGLPLSQPNGYYCPGALGLFTEDSTEYEAICKGTETKCINIVGHRHENYPGDISYNLKGCVSSCPLLSLSNSTHEENRNYLEKVECKDAFKIASH</sequence>
<dbReference type="EMBL" id="AB018372">
    <property type="protein sequence ID" value="BAA86970.1"/>
    <property type="molecule type" value="mRNA"/>
</dbReference>
<dbReference type="GO" id="GO:0005576">
    <property type="term" value="C:extracellular region"/>
    <property type="evidence" value="ECO:0007669"/>
    <property type="project" value="UniProtKB-SubCell"/>
</dbReference>
<dbReference type="GO" id="GO:0019834">
    <property type="term" value="F:phospholipase A2 inhibitor activity"/>
    <property type="evidence" value="ECO:0007669"/>
    <property type="project" value="UniProtKB-KW"/>
</dbReference>
<dbReference type="CDD" id="cd23629">
    <property type="entry name" value="TFP_LU_ECD_PLIGA"/>
    <property type="match status" value="1"/>
</dbReference>
<dbReference type="Gene3D" id="2.10.60.10">
    <property type="entry name" value="CD59"/>
    <property type="match status" value="1"/>
</dbReference>
<dbReference type="InterPro" id="IPR050918">
    <property type="entry name" value="CNF-like_PLA2_Inhibitor"/>
</dbReference>
<dbReference type="InterPro" id="IPR016054">
    <property type="entry name" value="LY6_UPA_recep-like"/>
</dbReference>
<dbReference type="InterPro" id="IPR016338">
    <property type="entry name" value="PLipase_A2-inh_b-type"/>
</dbReference>
<dbReference type="InterPro" id="IPR004126">
    <property type="entry name" value="PLipase_A2_inh_N"/>
</dbReference>
<dbReference type="InterPro" id="IPR045860">
    <property type="entry name" value="Snake_toxin-like_sf"/>
</dbReference>
<dbReference type="PANTHER" id="PTHR20914">
    <property type="entry name" value="LY6/PLAUR DOMAIN-CONTAINING PROTEIN 8"/>
    <property type="match status" value="1"/>
</dbReference>
<dbReference type="PANTHER" id="PTHR20914:SF30">
    <property type="entry name" value="LY6_PLAUR DOMAIN CONTAINING 9"/>
    <property type="match status" value="1"/>
</dbReference>
<dbReference type="Pfam" id="PF02988">
    <property type="entry name" value="PLA2_inh"/>
    <property type="match status" value="1"/>
</dbReference>
<dbReference type="PIRSF" id="PIRSF002023">
    <property type="entry name" value="PLA2_inhib_alpha/gamma"/>
    <property type="match status" value="1"/>
</dbReference>
<dbReference type="SMART" id="SM00134">
    <property type="entry name" value="LU"/>
    <property type="match status" value="1"/>
</dbReference>
<dbReference type="SUPFAM" id="SSF57302">
    <property type="entry name" value="Snake toxin-like"/>
    <property type="match status" value="1"/>
</dbReference>